<evidence type="ECO:0000255" key="1">
    <source>
        <dbReference type="HAMAP-Rule" id="MF_00235"/>
    </source>
</evidence>
<name>KAD_CLOTE</name>
<comment type="function">
    <text evidence="1">Catalyzes the reversible transfer of the terminal phosphate group between ATP and AMP. Plays an important role in cellular energy homeostasis and in adenine nucleotide metabolism.</text>
</comment>
<comment type="catalytic activity">
    <reaction evidence="1">
        <text>AMP + ATP = 2 ADP</text>
        <dbReference type="Rhea" id="RHEA:12973"/>
        <dbReference type="ChEBI" id="CHEBI:30616"/>
        <dbReference type="ChEBI" id="CHEBI:456215"/>
        <dbReference type="ChEBI" id="CHEBI:456216"/>
        <dbReference type="EC" id="2.7.4.3"/>
    </reaction>
</comment>
<comment type="pathway">
    <text evidence="1">Purine metabolism; AMP biosynthesis via salvage pathway; AMP from ADP: step 1/1.</text>
</comment>
<comment type="subunit">
    <text evidence="1">Monomer.</text>
</comment>
<comment type="subcellular location">
    <subcellularLocation>
        <location evidence="1">Cytoplasm</location>
    </subcellularLocation>
</comment>
<comment type="domain">
    <text evidence="1">Consists of three domains, a large central CORE domain and two small peripheral domains, NMPbind and LID, which undergo movements during catalysis. The LID domain closes over the site of phosphoryl transfer upon ATP binding. Assembling and dissambling the active center during each catalytic cycle provides an effective means to prevent ATP hydrolysis. Some bacteria have evolved a zinc-coordinating structure that stabilizes the LID domain.</text>
</comment>
<comment type="similarity">
    <text evidence="1">Belongs to the adenylate kinase family.</text>
</comment>
<feature type="chain" id="PRO_0000158759" description="Adenylate kinase">
    <location>
        <begin position="1"/>
        <end position="216"/>
    </location>
</feature>
<feature type="region of interest" description="NMP" evidence="1">
    <location>
        <begin position="30"/>
        <end position="59"/>
    </location>
</feature>
<feature type="region of interest" description="LID" evidence="1">
    <location>
        <begin position="126"/>
        <end position="163"/>
    </location>
</feature>
<feature type="binding site" evidence="1">
    <location>
        <begin position="10"/>
        <end position="15"/>
    </location>
    <ligand>
        <name>ATP</name>
        <dbReference type="ChEBI" id="CHEBI:30616"/>
    </ligand>
</feature>
<feature type="binding site" evidence="1">
    <location>
        <position position="31"/>
    </location>
    <ligand>
        <name>AMP</name>
        <dbReference type="ChEBI" id="CHEBI:456215"/>
    </ligand>
</feature>
<feature type="binding site" evidence="1">
    <location>
        <position position="36"/>
    </location>
    <ligand>
        <name>AMP</name>
        <dbReference type="ChEBI" id="CHEBI:456215"/>
    </ligand>
</feature>
<feature type="binding site" evidence="1">
    <location>
        <begin position="57"/>
        <end position="59"/>
    </location>
    <ligand>
        <name>AMP</name>
        <dbReference type="ChEBI" id="CHEBI:456215"/>
    </ligand>
</feature>
<feature type="binding site" evidence="1">
    <location>
        <begin position="85"/>
        <end position="88"/>
    </location>
    <ligand>
        <name>AMP</name>
        <dbReference type="ChEBI" id="CHEBI:456215"/>
    </ligand>
</feature>
<feature type="binding site" evidence="1">
    <location>
        <position position="92"/>
    </location>
    <ligand>
        <name>AMP</name>
        <dbReference type="ChEBI" id="CHEBI:456215"/>
    </ligand>
</feature>
<feature type="binding site" evidence="1">
    <location>
        <position position="127"/>
    </location>
    <ligand>
        <name>ATP</name>
        <dbReference type="ChEBI" id="CHEBI:30616"/>
    </ligand>
</feature>
<feature type="binding site" evidence="1">
    <location>
        <position position="130"/>
    </location>
    <ligand>
        <name>Zn(2+)</name>
        <dbReference type="ChEBI" id="CHEBI:29105"/>
        <note>structural</note>
    </ligand>
</feature>
<feature type="binding site" evidence="1">
    <location>
        <position position="133"/>
    </location>
    <ligand>
        <name>Zn(2+)</name>
        <dbReference type="ChEBI" id="CHEBI:29105"/>
        <note>structural</note>
    </ligand>
</feature>
<feature type="binding site" evidence="1">
    <location>
        <begin position="136"/>
        <end position="137"/>
    </location>
    <ligand>
        <name>ATP</name>
        <dbReference type="ChEBI" id="CHEBI:30616"/>
    </ligand>
</feature>
<feature type="binding site" evidence="1">
    <location>
        <position position="150"/>
    </location>
    <ligand>
        <name>Zn(2+)</name>
        <dbReference type="ChEBI" id="CHEBI:29105"/>
        <note>structural</note>
    </ligand>
</feature>
<feature type="binding site" evidence="1">
    <location>
        <position position="153"/>
    </location>
    <ligand>
        <name>Zn(2+)</name>
        <dbReference type="ChEBI" id="CHEBI:29105"/>
        <note>structural</note>
    </ligand>
</feature>
<feature type="binding site" evidence="1">
    <location>
        <position position="160"/>
    </location>
    <ligand>
        <name>AMP</name>
        <dbReference type="ChEBI" id="CHEBI:456215"/>
    </ligand>
</feature>
<feature type="binding site" evidence="1">
    <location>
        <position position="171"/>
    </location>
    <ligand>
        <name>AMP</name>
        <dbReference type="ChEBI" id="CHEBI:456215"/>
    </ligand>
</feature>
<feature type="binding site" evidence="1">
    <location>
        <position position="199"/>
    </location>
    <ligand>
        <name>ATP</name>
        <dbReference type="ChEBI" id="CHEBI:30616"/>
    </ligand>
</feature>
<proteinExistence type="inferred from homology"/>
<dbReference type="EC" id="2.7.4.3" evidence="1"/>
<dbReference type="EMBL" id="AE015927">
    <property type="protein sequence ID" value="AAO37040.1"/>
    <property type="molecule type" value="Genomic_DNA"/>
</dbReference>
<dbReference type="RefSeq" id="WP_011100701.1">
    <property type="nucleotide sequence ID" value="NC_004557.1"/>
</dbReference>
<dbReference type="SMR" id="Q890Q5"/>
<dbReference type="STRING" id="212717.CTC_02583"/>
<dbReference type="GeneID" id="24253805"/>
<dbReference type="KEGG" id="ctc:CTC_02583"/>
<dbReference type="HOGENOM" id="CLU_032354_1_2_9"/>
<dbReference type="OrthoDB" id="9805030at2"/>
<dbReference type="UniPathway" id="UPA00588">
    <property type="reaction ID" value="UER00649"/>
</dbReference>
<dbReference type="Proteomes" id="UP000001412">
    <property type="component" value="Chromosome"/>
</dbReference>
<dbReference type="GO" id="GO:0005737">
    <property type="term" value="C:cytoplasm"/>
    <property type="evidence" value="ECO:0007669"/>
    <property type="project" value="UniProtKB-SubCell"/>
</dbReference>
<dbReference type="GO" id="GO:0004017">
    <property type="term" value="F:adenylate kinase activity"/>
    <property type="evidence" value="ECO:0007669"/>
    <property type="project" value="UniProtKB-UniRule"/>
</dbReference>
<dbReference type="GO" id="GO:0005524">
    <property type="term" value="F:ATP binding"/>
    <property type="evidence" value="ECO:0007669"/>
    <property type="project" value="UniProtKB-UniRule"/>
</dbReference>
<dbReference type="GO" id="GO:0008270">
    <property type="term" value="F:zinc ion binding"/>
    <property type="evidence" value="ECO:0007669"/>
    <property type="project" value="UniProtKB-UniRule"/>
</dbReference>
<dbReference type="GO" id="GO:0044209">
    <property type="term" value="P:AMP salvage"/>
    <property type="evidence" value="ECO:0007669"/>
    <property type="project" value="UniProtKB-UniRule"/>
</dbReference>
<dbReference type="CDD" id="cd01428">
    <property type="entry name" value="ADK"/>
    <property type="match status" value="1"/>
</dbReference>
<dbReference type="FunFam" id="3.40.50.300:FF:000106">
    <property type="entry name" value="Adenylate kinase mitochondrial"/>
    <property type="match status" value="1"/>
</dbReference>
<dbReference type="Gene3D" id="3.40.50.300">
    <property type="entry name" value="P-loop containing nucleotide triphosphate hydrolases"/>
    <property type="match status" value="1"/>
</dbReference>
<dbReference type="HAMAP" id="MF_00235">
    <property type="entry name" value="Adenylate_kinase_Adk"/>
    <property type="match status" value="1"/>
</dbReference>
<dbReference type="InterPro" id="IPR006259">
    <property type="entry name" value="Adenyl_kin_sub"/>
</dbReference>
<dbReference type="InterPro" id="IPR000850">
    <property type="entry name" value="Adenylat/UMP-CMP_kin"/>
</dbReference>
<dbReference type="InterPro" id="IPR033690">
    <property type="entry name" value="Adenylat_kinase_CS"/>
</dbReference>
<dbReference type="InterPro" id="IPR007862">
    <property type="entry name" value="Adenylate_kinase_lid-dom"/>
</dbReference>
<dbReference type="InterPro" id="IPR027417">
    <property type="entry name" value="P-loop_NTPase"/>
</dbReference>
<dbReference type="NCBIfam" id="TIGR01351">
    <property type="entry name" value="adk"/>
    <property type="match status" value="1"/>
</dbReference>
<dbReference type="NCBIfam" id="NF001380">
    <property type="entry name" value="PRK00279.1-2"/>
    <property type="match status" value="1"/>
</dbReference>
<dbReference type="NCBIfam" id="NF001381">
    <property type="entry name" value="PRK00279.1-3"/>
    <property type="match status" value="1"/>
</dbReference>
<dbReference type="NCBIfam" id="NF011100">
    <property type="entry name" value="PRK14527.1"/>
    <property type="match status" value="1"/>
</dbReference>
<dbReference type="PANTHER" id="PTHR23359">
    <property type="entry name" value="NUCLEOTIDE KINASE"/>
    <property type="match status" value="1"/>
</dbReference>
<dbReference type="Pfam" id="PF00406">
    <property type="entry name" value="ADK"/>
    <property type="match status" value="1"/>
</dbReference>
<dbReference type="Pfam" id="PF05191">
    <property type="entry name" value="ADK_lid"/>
    <property type="match status" value="1"/>
</dbReference>
<dbReference type="PRINTS" id="PR00094">
    <property type="entry name" value="ADENYLTKNASE"/>
</dbReference>
<dbReference type="SUPFAM" id="SSF52540">
    <property type="entry name" value="P-loop containing nucleoside triphosphate hydrolases"/>
    <property type="match status" value="1"/>
</dbReference>
<dbReference type="PROSITE" id="PS00113">
    <property type="entry name" value="ADENYLATE_KINASE"/>
    <property type="match status" value="1"/>
</dbReference>
<reference key="1">
    <citation type="journal article" date="2003" name="Proc. Natl. Acad. Sci. U.S.A.">
        <title>The genome sequence of Clostridium tetani, the causative agent of tetanus disease.</title>
        <authorList>
            <person name="Brueggemann H."/>
            <person name="Baeumer S."/>
            <person name="Fricke W.F."/>
            <person name="Wiezer A."/>
            <person name="Liesegang H."/>
            <person name="Decker I."/>
            <person name="Herzberg C."/>
            <person name="Martinez-Arias R."/>
            <person name="Merkl R."/>
            <person name="Henne A."/>
            <person name="Gottschalk G."/>
        </authorList>
    </citation>
    <scope>NUCLEOTIDE SEQUENCE [LARGE SCALE GENOMIC DNA]</scope>
    <source>
        <strain>Massachusetts / E88</strain>
    </source>
</reference>
<sequence length="216" mass="24007">MNIILLGPPGAGKGTQAKLISEKYSIPHISTGDIFRKNISNKTPLGMEAKSYMDKGQLVPDELTIEIVKDRLGEEDCKNGFLLDGFPRTVKQAEALDEFLQNKSSKTDAALLIDVPQELILERMTGRRVCGECGASYHIKFITPKTEGVCDLCGGKLVQRKDDTKETVLERLEVYSKQTQPLIEYYKNKNVLLALDGTKEKNEVFENISNVLGAIN</sequence>
<gene>
    <name evidence="1" type="primary">adk</name>
    <name type="ordered locus">CTC_02583</name>
</gene>
<keyword id="KW-0067">ATP-binding</keyword>
<keyword id="KW-0963">Cytoplasm</keyword>
<keyword id="KW-0418">Kinase</keyword>
<keyword id="KW-0479">Metal-binding</keyword>
<keyword id="KW-0545">Nucleotide biosynthesis</keyword>
<keyword id="KW-0547">Nucleotide-binding</keyword>
<keyword id="KW-1185">Reference proteome</keyword>
<keyword id="KW-0808">Transferase</keyword>
<keyword id="KW-0862">Zinc</keyword>
<protein>
    <recommendedName>
        <fullName evidence="1">Adenylate kinase</fullName>
        <shortName evidence="1">AK</shortName>
        <ecNumber evidence="1">2.7.4.3</ecNumber>
    </recommendedName>
    <alternativeName>
        <fullName evidence="1">ATP-AMP transphosphorylase</fullName>
    </alternativeName>
    <alternativeName>
        <fullName evidence="1">ATP:AMP phosphotransferase</fullName>
    </alternativeName>
    <alternativeName>
        <fullName evidence="1">Adenylate monophosphate kinase</fullName>
    </alternativeName>
</protein>
<accession>Q890Q5</accession>
<organism>
    <name type="scientific">Clostridium tetani (strain Massachusetts / E88)</name>
    <dbReference type="NCBI Taxonomy" id="212717"/>
    <lineage>
        <taxon>Bacteria</taxon>
        <taxon>Bacillati</taxon>
        <taxon>Bacillota</taxon>
        <taxon>Clostridia</taxon>
        <taxon>Eubacteriales</taxon>
        <taxon>Clostridiaceae</taxon>
        <taxon>Clostridium</taxon>
    </lineage>
</organism>